<gene>
    <name evidence="1" type="primary">lsrF</name>
    <name type="ordered locus">STM4078</name>
</gene>
<proteinExistence type="evidence at transcript level"/>
<accession>Q8ZKQ0</accession>
<organism>
    <name type="scientific">Salmonella typhimurium (strain LT2 / SGSC1412 / ATCC 700720)</name>
    <dbReference type="NCBI Taxonomy" id="99287"/>
    <lineage>
        <taxon>Bacteria</taxon>
        <taxon>Pseudomonadati</taxon>
        <taxon>Pseudomonadota</taxon>
        <taxon>Gammaproteobacteria</taxon>
        <taxon>Enterobacterales</taxon>
        <taxon>Enterobacteriaceae</taxon>
        <taxon>Salmonella</taxon>
    </lineage>
</organism>
<name>LSRF_SALTY</name>
<protein>
    <recommendedName>
        <fullName evidence="1">3-hydroxy-5-phosphonooxypentane-2,4-dione thiolase</fullName>
        <ecNumber evidence="1">2.3.1.245</ecNumber>
    </recommendedName>
</protein>
<reference key="1">
    <citation type="journal article" date="2001" name="Nature">
        <title>Complete genome sequence of Salmonella enterica serovar Typhimurium LT2.</title>
        <authorList>
            <person name="McClelland M."/>
            <person name="Sanderson K.E."/>
            <person name="Spieth J."/>
            <person name="Clifton S.W."/>
            <person name="Latreille P."/>
            <person name="Courtney L."/>
            <person name="Porwollik S."/>
            <person name="Ali J."/>
            <person name="Dante M."/>
            <person name="Du F."/>
            <person name="Hou S."/>
            <person name="Layman D."/>
            <person name="Leonard S."/>
            <person name="Nguyen C."/>
            <person name="Scott K."/>
            <person name="Holmes A."/>
            <person name="Grewal N."/>
            <person name="Mulvaney E."/>
            <person name="Ryan E."/>
            <person name="Sun H."/>
            <person name="Florea L."/>
            <person name="Miller W."/>
            <person name="Stoneking T."/>
            <person name="Nhan M."/>
            <person name="Waterston R."/>
            <person name="Wilson R.K."/>
        </authorList>
    </citation>
    <scope>NUCLEOTIDE SEQUENCE [LARGE SCALE GENOMIC DNA]</scope>
    <source>
        <strain>LT2 / SGSC1412 / ATCC 700720</strain>
    </source>
</reference>
<reference key="2">
    <citation type="journal article" date="2001" name="Mol. Microbiol.">
        <title>The LuxS-dependent autoinducer AI-2 controls the expression of an ABC transporter that functions in AI-2 uptake in Salmonella typhimurium.</title>
        <authorList>
            <person name="Taga M.E."/>
            <person name="Semmelhack J.L."/>
            <person name="Bassler B.L."/>
        </authorList>
    </citation>
    <scope>INDUCTION</scope>
    <source>
        <strain>ATCC 14028 / SGSG 2980 / CDC 6516-60 / NCTC 12023</strain>
    </source>
</reference>
<reference key="3">
    <citation type="journal article" date="2003" name="Mol. Microbiol.">
        <title>Lsr-mediated transport and processing of AI-2 in Salmonella typhimurium.</title>
        <authorList>
            <person name="Taga M.E."/>
            <person name="Miller S.T."/>
            <person name="Bassler B.L."/>
        </authorList>
    </citation>
    <scope>PRELIMINARY FUNCTION</scope>
    <scope>INDUCTION</scope>
    <source>
        <strain>ATCC 14028 / SGSG 2980 / CDC 6516-60 / NCTC 12023</strain>
    </source>
</reference>
<feature type="chain" id="PRO_0000351530" description="3-hydroxy-5-phosphonooxypentane-2,4-dione thiolase">
    <location>
        <begin position="1"/>
        <end position="291"/>
    </location>
</feature>
<feature type="active site" description="Schiff-base intermediate with substrate" evidence="1">
    <location>
        <position position="203"/>
    </location>
</feature>
<dbReference type="EC" id="2.3.1.245" evidence="1"/>
<dbReference type="EMBL" id="AE006468">
    <property type="protein sequence ID" value="AAL22918.1"/>
    <property type="molecule type" value="Genomic_DNA"/>
</dbReference>
<dbReference type="RefSeq" id="WP_000774147.1">
    <property type="nucleotide sequence ID" value="NC_003197.2"/>
</dbReference>
<dbReference type="SMR" id="Q8ZKQ0"/>
<dbReference type="STRING" id="99287.STM4078"/>
<dbReference type="PaxDb" id="99287-STM4078"/>
<dbReference type="KEGG" id="stm:STM4078"/>
<dbReference type="PATRIC" id="fig|99287.12.peg.4298"/>
<dbReference type="HOGENOM" id="CLU_057069_1_0_6"/>
<dbReference type="OMA" id="CEYWGMP"/>
<dbReference type="PhylomeDB" id="Q8ZKQ0"/>
<dbReference type="BioCyc" id="SENT99287:STM4078-MONOMER"/>
<dbReference type="Proteomes" id="UP000001014">
    <property type="component" value="Chromosome"/>
</dbReference>
<dbReference type="GO" id="GO:0005737">
    <property type="term" value="C:cytoplasm"/>
    <property type="evidence" value="ECO:0007669"/>
    <property type="project" value="UniProtKB-SubCell"/>
</dbReference>
<dbReference type="GO" id="GO:0016747">
    <property type="term" value="F:acyltransferase activity, transferring groups other than amino-acyl groups"/>
    <property type="evidence" value="ECO:0000318"/>
    <property type="project" value="GO_Central"/>
</dbReference>
<dbReference type="GO" id="GO:0004332">
    <property type="term" value="F:fructose-bisphosphate aldolase activity"/>
    <property type="evidence" value="ECO:0007669"/>
    <property type="project" value="InterPro"/>
</dbReference>
<dbReference type="CDD" id="cd00958">
    <property type="entry name" value="DhnA"/>
    <property type="match status" value="1"/>
</dbReference>
<dbReference type="Gene3D" id="3.20.20.70">
    <property type="entry name" value="Aldolase class I"/>
    <property type="match status" value="1"/>
</dbReference>
<dbReference type="HAMAP" id="MF_02052">
    <property type="entry name" value="LsrF"/>
    <property type="match status" value="1"/>
</dbReference>
<dbReference type="InterPro" id="IPR013785">
    <property type="entry name" value="Aldolase_TIM"/>
</dbReference>
<dbReference type="InterPro" id="IPR002915">
    <property type="entry name" value="DeoC/FbaB/LacD_aldolase"/>
</dbReference>
<dbReference type="InterPro" id="IPR050456">
    <property type="entry name" value="DeoC/FbaB_aldolase"/>
</dbReference>
<dbReference type="InterPro" id="IPR041720">
    <property type="entry name" value="FbaB-like"/>
</dbReference>
<dbReference type="InterPro" id="IPR033673">
    <property type="entry name" value="LsrF"/>
</dbReference>
<dbReference type="NCBIfam" id="NF006081">
    <property type="entry name" value="PRK08227.1"/>
    <property type="match status" value="1"/>
</dbReference>
<dbReference type="PANTHER" id="PTHR47916:SF1">
    <property type="entry name" value="3-HYDROXY-5-PHOSPHONOOXYPENTANE-2,4-DIONE THIOLASE"/>
    <property type="match status" value="1"/>
</dbReference>
<dbReference type="PANTHER" id="PTHR47916">
    <property type="entry name" value="FRUCTOSE-BISPHOSPHATE ALDOLASE CLASS 1"/>
    <property type="match status" value="1"/>
</dbReference>
<dbReference type="Pfam" id="PF01791">
    <property type="entry name" value="DeoC"/>
    <property type="match status" value="1"/>
</dbReference>
<dbReference type="PIRSF" id="PIRSF038992">
    <property type="entry name" value="Aldolase_Ia"/>
    <property type="match status" value="1"/>
</dbReference>
<dbReference type="SMART" id="SM01133">
    <property type="entry name" value="DeoC"/>
    <property type="match status" value="1"/>
</dbReference>
<dbReference type="SUPFAM" id="SSF51569">
    <property type="entry name" value="Aldolase"/>
    <property type="match status" value="1"/>
</dbReference>
<comment type="function">
    <text evidence="1">Involved in the degradation of phospho-AI-2, thereby terminating induction of the lsr operon and closing the AI-2 signaling cycle. Catalyzes the transfer of an acetyl moiety from 3-hydroxy-5-phosphonooxypentane-2,4-dione to CoA to form glycerone phosphate and acetyl-CoA.</text>
</comment>
<comment type="catalytic activity">
    <reaction evidence="1">
        <text>dihydroxyacetone phosphate + acetyl-CoA = 3-hydroxy-2,4-dioxopentyl phosphate + CoA</text>
        <dbReference type="Rhea" id="RHEA:44736"/>
        <dbReference type="ChEBI" id="CHEBI:57287"/>
        <dbReference type="ChEBI" id="CHEBI:57288"/>
        <dbReference type="ChEBI" id="CHEBI:57642"/>
        <dbReference type="ChEBI" id="CHEBI:84359"/>
        <dbReference type="EC" id="2.3.1.245"/>
    </reaction>
</comment>
<comment type="subunit">
    <text evidence="1">Homodecamer.</text>
</comment>
<comment type="subcellular location">
    <subcellularLocation>
        <location evidence="1">Cytoplasm</location>
    </subcellularLocation>
</comment>
<comment type="induction">
    <text evidence="2 3">In the absence of AI-2, repressed by LsrR. Induced by AI-2, via release of the LsrR repressor.</text>
</comment>
<comment type="similarity">
    <text evidence="1">Belongs to the DeoC/FbaB aldolase family.</text>
</comment>
<evidence type="ECO:0000255" key="1">
    <source>
        <dbReference type="HAMAP-Rule" id="MF_02052"/>
    </source>
</evidence>
<evidence type="ECO:0000269" key="2">
    <source>
    </source>
</evidence>
<evidence type="ECO:0000269" key="3">
    <source>
    </source>
</evidence>
<sequence>MADLDDIKDGKDFHTDKPQTNTLFALKGCGALDWGMQSRLARIFNPKTRKTVMLAFDHGYFQGPTTGLERIDINIAPLFEYADVLMCTRGILRSVVPPAINKPVVLRASGANSILTELSNEAVAVAMDDAVRLNSCAAAAQVYIGSEHEHQSIKNIIQLIDAGLRVGMPIMAVTGVGKDMARDQRYFSLATRIAAEMGAQIIKTYYVDKGFERIAAGCPVPIVIAGGKKLPEREALEMCYQAIDQGASGVDMGRNIFQSEDPVAMIKAVHAVVHHNETAERAYELFLSEKS</sequence>
<keyword id="KW-0963">Cytoplasm</keyword>
<keyword id="KW-1185">Reference proteome</keyword>
<keyword id="KW-0704">Schiff base</keyword>
<keyword id="KW-0808">Transferase</keyword>